<sequence>METNCRKLVSACVQLGVQPAAVECLFSKDSEIKKVEFTDSPESRKEAASSKFFPRQHPGANEKDKSQQGKNEDVGAEDPSKKKRQRRQRTHFTSQQLQELEATFQRNRYPDMSTREEIAVWTNLTEARVRVWFKNRRAKWRKRERNQQAELCKNGFGPQFNGLMQPYDDMYPGYSYNNWAAKGLTSASLSTKSFPFFNSMNVNPLSSQSMFSPPNSISSMSMSSSMVPSAVTGVPGSSLNSLNNLNNLSSPSLNSAVPTPACPYAPPTPPYVYRDTCNSSLASLRLKAKQHSSFGYASVQNPASNLSACQYAVDRPV</sequence>
<name>PITX2_HUMAN</name>
<reference key="1">
    <citation type="journal article" date="1996" name="Nat. Genet.">
        <title>Cloning and characterization of a novel bicoid-related homeobox transcription factor gene, RIEG, involved in Rieger syndrome.</title>
        <authorList>
            <person name="Semina E.V."/>
            <person name="Reiter R."/>
            <person name="Leysens N.J."/>
            <person name="Alward W.L.M."/>
            <person name="Small K.W."/>
            <person name="Datson N.A."/>
            <person name="Siegle-Bartelt J."/>
            <person name="Bierke-Nelson D."/>
            <person name="Bitoun P."/>
            <person name="Zabel B.U."/>
            <person name="Carey J.C."/>
            <person name="Murray J.C."/>
        </authorList>
    </citation>
    <scope>NUCLEOTIDE SEQUENCE [MRNA] (ISOFORM PTX2B)</scope>
    <scope>VARIANTS RIEG1 GLN-100; PRO-114; PRO-137 AND 179-TRP--VAL-317 DEL</scope>
    <source>
        <tissue>Craniofacial</tissue>
        <tissue>Fetal brain</tissue>
    </source>
</reference>
<reference key="2">
    <citation type="journal article" date="1998" name="Proc. Natl. Acad. Sci. U.S.A.">
        <title>Identification and characterization of the ARP1 gene, a target for the human acute leukemia ALL1 gene.</title>
        <authorList>
            <person name="Arakawa H."/>
            <person name="Nakamura T."/>
            <person name="Zhadanov A.B."/>
            <person name="Fidanza Y."/>
            <person name="Yano T."/>
            <person name="Bullrich F."/>
            <person name="Shimizu M."/>
            <person name="Blechman J."/>
            <person name="Mazo A."/>
            <person name="Canaani E."/>
            <person name="Croce C.M."/>
        </authorList>
    </citation>
    <scope>NUCLEOTIDE SEQUENCE [MRNA] (ISOFORMS PTX2A; PTX2B AND PTX2C)</scope>
    <scope>ALTERNATIVE SPLICING</scope>
</reference>
<reference key="3">
    <citation type="submission" date="2000-02" db="EMBL/GenBank/DDBJ databases">
        <title>Spectrum and frequency of PITX2 mutations in patients with Rieger syndrome and related ocular anomalies.</title>
        <authorList>
            <person name="Semina E.V."/>
            <person name="Funkhauser C."/>
            <person name="Bitoun P."/>
            <person name="Daack-Hirsch S."/>
            <person name="Alward W.L.M."/>
            <person name="Amendt B."/>
            <person name="Murray J.C."/>
        </authorList>
    </citation>
    <scope>NUCLEOTIDE SEQUENCE [GENOMIC DNA] (ISOFORM PTX2A)</scope>
</reference>
<reference key="4">
    <citation type="journal article" date="2004" name="Nat. Genet.">
        <title>Complete sequencing and characterization of 21,243 full-length human cDNAs.</title>
        <authorList>
            <person name="Ota T."/>
            <person name="Suzuki Y."/>
            <person name="Nishikawa T."/>
            <person name="Otsuki T."/>
            <person name="Sugiyama T."/>
            <person name="Irie R."/>
            <person name="Wakamatsu A."/>
            <person name="Hayashi K."/>
            <person name="Sato H."/>
            <person name="Nagai K."/>
            <person name="Kimura K."/>
            <person name="Makita H."/>
            <person name="Sekine M."/>
            <person name="Obayashi M."/>
            <person name="Nishi T."/>
            <person name="Shibahara T."/>
            <person name="Tanaka T."/>
            <person name="Ishii S."/>
            <person name="Yamamoto J."/>
            <person name="Saito K."/>
            <person name="Kawai Y."/>
            <person name="Isono Y."/>
            <person name="Nakamura Y."/>
            <person name="Nagahari K."/>
            <person name="Murakami K."/>
            <person name="Yasuda T."/>
            <person name="Iwayanagi T."/>
            <person name="Wagatsuma M."/>
            <person name="Shiratori A."/>
            <person name="Sudo H."/>
            <person name="Hosoiri T."/>
            <person name="Kaku Y."/>
            <person name="Kodaira H."/>
            <person name="Kondo H."/>
            <person name="Sugawara M."/>
            <person name="Takahashi M."/>
            <person name="Kanda K."/>
            <person name="Yokoi T."/>
            <person name="Furuya T."/>
            <person name="Kikkawa E."/>
            <person name="Omura Y."/>
            <person name="Abe K."/>
            <person name="Kamihara K."/>
            <person name="Katsuta N."/>
            <person name="Sato K."/>
            <person name="Tanikawa M."/>
            <person name="Yamazaki M."/>
            <person name="Ninomiya K."/>
            <person name="Ishibashi T."/>
            <person name="Yamashita H."/>
            <person name="Murakawa K."/>
            <person name="Fujimori K."/>
            <person name="Tanai H."/>
            <person name="Kimata M."/>
            <person name="Watanabe M."/>
            <person name="Hiraoka S."/>
            <person name="Chiba Y."/>
            <person name="Ishida S."/>
            <person name="Ono Y."/>
            <person name="Takiguchi S."/>
            <person name="Watanabe S."/>
            <person name="Yosida M."/>
            <person name="Hotuta T."/>
            <person name="Kusano J."/>
            <person name="Kanehori K."/>
            <person name="Takahashi-Fujii A."/>
            <person name="Hara H."/>
            <person name="Tanase T.-O."/>
            <person name="Nomura Y."/>
            <person name="Togiya S."/>
            <person name="Komai F."/>
            <person name="Hara R."/>
            <person name="Takeuchi K."/>
            <person name="Arita M."/>
            <person name="Imose N."/>
            <person name="Musashino K."/>
            <person name="Yuuki H."/>
            <person name="Oshima A."/>
            <person name="Sasaki N."/>
            <person name="Aotsuka S."/>
            <person name="Yoshikawa Y."/>
            <person name="Matsunawa H."/>
            <person name="Ichihara T."/>
            <person name="Shiohata N."/>
            <person name="Sano S."/>
            <person name="Moriya S."/>
            <person name="Momiyama H."/>
            <person name="Satoh N."/>
            <person name="Takami S."/>
            <person name="Terashima Y."/>
            <person name="Suzuki O."/>
            <person name="Nakagawa S."/>
            <person name="Senoh A."/>
            <person name="Mizoguchi H."/>
            <person name="Goto Y."/>
            <person name="Shimizu F."/>
            <person name="Wakebe H."/>
            <person name="Hishigaki H."/>
            <person name="Watanabe T."/>
            <person name="Sugiyama A."/>
            <person name="Takemoto M."/>
            <person name="Kawakami B."/>
            <person name="Yamazaki M."/>
            <person name="Watanabe K."/>
            <person name="Kumagai A."/>
            <person name="Itakura S."/>
            <person name="Fukuzumi Y."/>
            <person name="Fujimori Y."/>
            <person name="Komiyama M."/>
            <person name="Tashiro H."/>
            <person name="Tanigami A."/>
            <person name="Fujiwara T."/>
            <person name="Ono T."/>
            <person name="Yamada K."/>
            <person name="Fujii Y."/>
            <person name="Ozaki K."/>
            <person name="Hirao M."/>
            <person name="Ohmori Y."/>
            <person name="Kawabata A."/>
            <person name="Hikiji T."/>
            <person name="Kobatake N."/>
            <person name="Inagaki H."/>
            <person name="Ikema Y."/>
            <person name="Okamoto S."/>
            <person name="Okitani R."/>
            <person name="Kawakami T."/>
            <person name="Noguchi S."/>
            <person name="Itoh T."/>
            <person name="Shigeta K."/>
            <person name="Senba T."/>
            <person name="Matsumura K."/>
            <person name="Nakajima Y."/>
            <person name="Mizuno T."/>
            <person name="Morinaga M."/>
            <person name="Sasaki M."/>
            <person name="Togashi T."/>
            <person name="Oyama M."/>
            <person name="Hata H."/>
            <person name="Watanabe M."/>
            <person name="Komatsu T."/>
            <person name="Mizushima-Sugano J."/>
            <person name="Satoh T."/>
            <person name="Shirai Y."/>
            <person name="Takahashi Y."/>
            <person name="Nakagawa K."/>
            <person name="Okumura K."/>
            <person name="Nagase T."/>
            <person name="Nomura N."/>
            <person name="Kikuchi H."/>
            <person name="Masuho Y."/>
            <person name="Yamashita R."/>
            <person name="Nakai K."/>
            <person name="Yada T."/>
            <person name="Nakamura Y."/>
            <person name="Ohara O."/>
            <person name="Isogai T."/>
            <person name="Sugano S."/>
        </authorList>
    </citation>
    <scope>NUCLEOTIDE SEQUENCE [LARGE SCALE MRNA] (ISOFORMS PTX2A; PTX2B AND PTX2C)</scope>
    <source>
        <tissue>Placenta</tissue>
        <tissue>Tongue</tissue>
    </source>
</reference>
<reference key="5">
    <citation type="submission" date="2005-07" db="EMBL/GenBank/DDBJ databases">
        <authorList>
            <person name="Mural R.J."/>
            <person name="Istrail S."/>
            <person name="Sutton G.G."/>
            <person name="Florea L."/>
            <person name="Halpern A.L."/>
            <person name="Mobarry C.M."/>
            <person name="Lippert R."/>
            <person name="Walenz B."/>
            <person name="Shatkay H."/>
            <person name="Dew I."/>
            <person name="Miller J.R."/>
            <person name="Flanigan M.J."/>
            <person name="Edwards N.J."/>
            <person name="Bolanos R."/>
            <person name="Fasulo D."/>
            <person name="Halldorsson B.V."/>
            <person name="Hannenhalli S."/>
            <person name="Turner R."/>
            <person name="Yooseph S."/>
            <person name="Lu F."/>
            <person name="Nusskern D.R."/>
            <person name="Shue B.C."/>
            <person name="Zheng X.H."/>
            <person name="Zhong F."/>
            <person name="Delcher A.L."/>
            <person name="Huson D.H."/>
            <person name="Kravitz S.A."/>
            <person name="Mouchard L."/>
            <person name="Reinert K."/>
            <person name="Remington K.A."/>
            <person name="Clark A.G."/>
            <person name="Waterman M.S."/>
            <person name="Eichler E.E."/>
            <person name="Adams M.D."/>
            <person name="Hunkapiller M.W."/>
            <person name="Myers E.W."/>
            <person name="Venter J.C."/>
        </authorList>
    </citation>
    <scope>NUCLEOTIDE SEQUENCE [LARGE SCALE GENOMIC DNA]</scope>
</reference>
<reference key="6">
    <citation type="journal article" date="2004" name="Genome Res.">
        <title>The status, quality, and expansion of the NIH full-length cDNA project: the Mammalian Gene Collection (MGC).</title>
        <authorList>
            <consortium name="The MGC Project Team"/>
        </authorList>
    </citation>
    <scope>NUCLEOTIDE SEQUENCE [LARGE SCALE MRNA] (ISOFORMS PTX2C AND PTX2A)</scope>
    <source>
        <tissue>Lung</tissue>
        <tissue>Uterus</tissue>
    </source>
</reference>
<reference key="7">
    <citation type="journal article" date="2012" name="Mol. Vis.">
        <title>Yeast two-hybrid analysis of a human trabecular meshwork cDNA library identified EFEMP2 as a novel PITX2 interacting protein.</title>
        <authorList>
            <person name="Acharya M."/>
            <person name="Sharp M.W."/>
            <person name="Mirzayans F."/>
            <person name="Footz T."/>
            <person name="Huang L."/>
            <person name="Birdi C."/>
            <person name="Walter M.A."/>
        </authorList>
    </citation>
    <scope>INTERACTION WITH EFEMP2</scope>
</reference>
<reference key="8">
    <citation type="journal article" date="2012" name="Biochemistry">
        <title>Structural and biophysical insights into the ligand-free Pitx2 homeodomain and a ring dermoid of the cornea inducing homeodomain mutant.</title>
        <authorList>
            <person name="Doerdelmann T."/>
            <person name="Kojetin D.J."/>
            <person name="Baird-Titus J.M."/>
            <person name="Solt L.A."/>
            <person name="Burris T.P."/>
            <person name="Rance M."/>
        </authorList>
    </citation>
    <scope>STRUCTURE BY NMR OF 85-144 OF WILD-TYPE AND MUTANT HIS-108 IN COMPLEX WITH DNA</scope>
    <scope>VARIANT RDC HIS-108</scope>
</reference>
<reference key="9">
    <citation type="journal article" date="1998" name="Am. J. Ophthalmol.">
        <title>Autosomal dominant iris hypoplasia is caused by a mutation in the Rieger syndrome (RIEG/PITX2) gene.</title>
        <authorList>
            <person name="Alward W.L.M."/>
            <person name="Semina E.V."/>
            <person name="Kalenak J.W."/>
            <person name="Heon E."/>
            <person name="Sheth B.P."/>
            <person name="Stone E.M."/>
            <person name="Murray J.C."/>
        </authorList>
    </citation>
    <scope>VARIANT ASGD4 TRP-130</scope>
</reference>
<reference key="10">
    <citation type="journal article" date="1998" name="Hum. Mol. Genet.">
        <title>Mutation in the RIEG1 gene in patients with iridogoniodysgenesis syndrome.</title>
        <authorList>
            <person name="Kulak S.C."/>
            <person name="Kozlowski K."/>
            <person name="Semina E.V."/>
            <person name="Pearce W.G."/>
            <person name="Walter M.A."/>
        </authorList>
    </citation>
    <scope>VARIANT ASGD4 HIS-115</scope>
</reference>
<reference key="11">
    <citation type="journal article" date="1999" name="J. Med. Genet.">
        <title>A mutation in the RIEG1 gene associated with Peters' anomaly.</title>
        <authorList>
            <person name="Doward W."/>
            <person name="Perveen R."/>
            <person name="Lloyd I.C."/>
            <person name="Ridgway A.E.A."/>
            <person name="Wilson L."/>
            <person name="Black G.C.M."/>
        </authorList>
    </citation>
    <scope>INVOLVEMENT IN ASGD4</scope>
</reference>
<reference key="12">
    <citation type="journal article" date="2000" name="Invest. Ophthalmol. Vis. Sci.">
        <title>Phenotypic variability and asymmetry of Rieger syndrome associated with PITX2 mutations.</title>
        <authorList>
            <person name="Perveen R."/>
            <person name="Lloyd I.C."/>
            <person name="Clayton-Smith J."/>
            <person name="Churchill A."/>
            <person name="van Heyningen V."/>
            <person name="Hanson I."/>
            <person name="Taylor D."/>
            <person name="McKeown C."/>
            <person name="Super M."/>
            <person name="Kerr B."/>
            <person name="Winter R."/>
            <person name="Black G.C.M."/>
        </authorList>
    </citation>
    <scope>VARIANTS RIEG1 GLU-134 AND CYS-136</scope>
</reference>
<reference key="13">
    <citation type="journal article" date="2001" name="Hum. Mol. Genet.">
        <title>Functional analyses of two newly identified PITX2 mutants reveal a novel molecular mechanism for Axenfeld-Rieger syndrome.</title>
        <authorList>
            <person name="Priston M."/>
            <person name="Kozlowski K."/>
            <person name="Gill D."/>
            <person name="Letwin K."/>
            <person name="Buys Y."/>
            <person name="Levin A.V."/>
            <person name="Walter M.A."/>
            <person name="Heon E."/>
        </authorList>
    </citation>
    <scope>VARIANTS RIEG1 128-ARG--LYS-134 DEL AND LEU-129</scope>
    <scope>CHARACTERIZATION OF VARIANTS RIEG1 128-ARG--LYS-134 DEL AND LEU-129</scope>
</reference>
<reference key="14">
    <citation type="journal article" date="2002" name="Ophthalmic Res.">
        <title>Four novel mutations in the PITX2 gene in patients with Axenfeld-Rieger syndrome.</title>
        <authorList>
            <person name="Phillips J.C."/>
        </authorList>
    </citation>
    <scope>VARIANTS RIEG1 LEU-110; CYS-136; VAL-151 AND THR-154</scope>
</reference>
<reference key="15">
    <citation type="journal article" date="2004" name="J. Med. Genet.">
        <title>Mutation in PITX2 is associated with ring dermoid of the cornea.</title>
        <authorList>
            <person name="Xia K."/>
            <person name="Wu L."/>
            <person name="Liu X."/>
            <person name="Xi X."/>
            <person name="Liang D."/>
            <person name="Zheng D."/>
            <person name="Cai F."/>
            <person name="Pan Q."/>
            <person name="Long Z."/>
            <person name="Dai H."/>
            <person name="Hu Z."/>
            <person name="Tang B."/>
            <person name="Zhang Z."/>
            <person name="Xia J."/>
        </authorList>
    </citation>
    <scope>VARIANT RDC HIS-108</scope>
</reference>
<reference key="16">
    <citation type="journal article" date="2006" name="Invest. Ophthalmol. Vis. Sci.">
        <title>Novel mutations of FOXC1 and PITX2 in patients with Axenfeld-Rieger malformations.</title>
        <authorList>
            <person name="Weisschuh N."/>
            <person name="Dressler P."/>
            <person name="Schuettauf F."/>
            <person name="Wolf C."/>
            <person name="Wissinger B."/>
            <person name="Gramer E."/>
        </authorList>
    </citation>
    <scope>VARIANTS RIEG1 LEU-110 AND ARG-110</scope>
</reference>
<reference key="17">
    <citation type="journal article" date="2006" name="Invest. Ophthalmol. Vis. Sci.">
        <authorList>
            <person name="Weisschuh N."/>
            <person name="Dressler P."/>
            <person name="Schuettauf F."/>
            <person name="Wolf C."/>
            <person name="Wissinger B."/>
            <person name="Gramer E."/>
        </authorList>
    </citation>
    <scope>ERRATUM OF PUBMED:16936096</scope>
</reference>
<reference key="18">
    <citation type="journal article" date="2011" name="Invest. Ophthalmol. Vis. Sci.">
        <title>Expanding the spectrum of FOXC1 and PITX2 mutations and copy number changes in patients with anterior segment malformations.</title>
        <authorList>
            <person name="D'haene B."/>
            <person name="Meire F."/>
            <person name="Claerhout I."/>
            <person name="Kroes H.Y."/>
            <person name="Plomp A."/>
            <person name="Arens Y.H."/>
            <person name="de Ravel T."/>
            <person name="Casteels I."/>
            <person name="De Jaegere S."/>
            <person name="Hooghe S."/>
            <person name="Wuyts W."/>
            <person name="van den Ende J."/>
            <person name="Roulez F."/>
            <person name="Veenstra-Knol H.E."/>
            <person name="Oldenburg R.A."/>
            <person name="Giltay J."/>
            <person name="Verheij J.B."/>
            <person name="de Faber J.T."/>
            <person name="Menten B."/>
            <person name="De Paepe A."/>
            <person name="Kestelyn P."/>
            <person name="Leroy B.P."/>
            <person name="De Baere E."/>
        </authorList>
    </citation>
    <scope>VARIANT ASGD4 LEU-58 (ISOFORM PTX2A)</scope>
</reference>
<comment type="function">
    <text evidence="2">May play a role in myoblast differentiation. When unphosphorylated, associates with an ELAVL1-containing complex, which stabilizes cyclin mRNA and ensuring cell proliferation. Phosphorylation by AKT2 impairs this association, leading to CCND1 mRNA destabilization and progression towards differentiation.</text>
</comment>
<comment type="function">
    <molecule>Isoform PTX2C</molecule>
    <text evidence="2">Involved in the establishment of left-right asymmetry in the developing embryo.</text>
</comment>
<comment type="subunit">
    <text evidence="2 15">Interacts with EFEMP2 (PubMed:22919265). Interacts (when unphosphorylated on Thr-90) with ELAVL1/HUR (By similarity).</text>
</comment>
<comment type="interaction">
    <interactant intactId="EBI-1175211">
        <id>Q99697</id>
    </interactant>
    <interactant intactId="EBI-354065">
        <id>P67809</id>
        <label>YBX1</label>
    </interactant>
    <organismsDiffer>false</organismsDiffer>
    <experiments>3</experiments>
</comment>
<comment type="interaction">
    <interactant intactId="EBI-1175211">
        <id>Q99697</id>
    </interactant>
    <interactant intactId="EBI-3957603">
        <id>P09022</id>
        <label>Hoxa1</label>
    </interactant>
    <organismsDiffer>true</organismsDiffer>
    <experiments>3</experiments>
</comment>
<comment type="interaction">
    <interactant intactId="EBI-12138495">
        <id>Q99697-2</id>
    </interactant>
    <interactant intactId="EBI-12102070">
        <id>Q9NXR5-2</id>
        <label>ANKRD10</label>
    </interactant>
    <organismsDiffer>false</organismsDiffer>
    <experiments>3</experiments>
</comment>
<comment type="interaction">
    <interactant intactId="EBI-12138495">
        <id>Q99697-2</id>
    </interactant>
    <interactant intactId="EBI-11954292">
        <id>Q86V38</id>
        <label>ATN1</label>
    </interactant>
    <organismsDiffer>false</organismsDiffer>
    <experiments>3</experiments>
</comment>
<comment type="interaction">
    <interactant intactId="EBI-12138495">
        <id>Q99697-2</id>
    </interactant>
    <interactant intactId="EBI-3867333">
        <id>A8MQ03</id>
        <label>CYSRT1</label>
    </interactant>
    <organismsDiffer>false</organismsDiffer>
    <experiments>3</experiments>
</comment>
<comment type="interaction">
    <interactant intactId="EBI-12138495">
        <id>Q99697-2</id>
    </interactant>
    <interactant intactId="EBI-724310">
        <id>Q15038</id>
        <label>DAZAP2</label>
    </interactant>
    <organismsDiffer>false</organismsDiffer>
    <experiments>3</experiments>
</comment>
<comment type="interaction">
    <interactant intactId="EBI-12138495">
        <id>Q99697-2</id>
    </interactant>
    <interactant intactId="EBI-742054">
        <id>Q96D03</id>
        <label>DDIT4L</label>
    </interactant>
    <organismsDiffer>false</organismsDiffer>
    <experiments>3</experiments>
</comment>
<comment type="interaction">
    <interactant intactId="EBI-12138495">
        <id>Q99697-2</id>
    </interactant>
    <interactant intactId="EBI-1176455">
        <id>P63172</id>
        <label>DYNLT1</label>
    </interactant>
    <organismsDiffer>false</organismsDiffer>
    <experiments>3</experiments>
</comment>
<comment type="interaction">
    <interactant intactId="EBI-12138495">
        <id>Q99697-2</id>
    </interactant>
    <interactant intactId="EBI-7231130">
        <id>Q9Y5J3</id>
        <label>HEY1</label>
    </interactant>
    <organismsDiffer>false</organismsDiffer>
    <experiments>3</experiments>
</comment>
<comment type="interaction">
    <interactant intactId="EBI-12138495">
        <id>Q99697-2</id>
    </interactant>
    <interactant intactId="EBI-740785">
        <id>P49639</id>
        <label>HOXA1</label>
    </interactant>
    <organismsDiffer>false</organismsDiffer>
    <experiments>3</experiments>
</comment>
<comment type="interaction">
    <interactant intactId="EBI-12138495">
        <id>Q99697-2</id>
    </interactant>
    <interactant intactId="EBI-1047093">
        <id>O76011</id>
        <label>KRT34</label>
    </interactant>
    <organismsDiffer>false</organismsDiffer>
    <experiments>3</experiments>
</comment>
<comment type="interaction">
    <interactant intactId="EBI-12138495">
        <id>Q99697-2</id>
    </interactant>
    <interactant intactId="EBI-11992140">
        <id>Q3LI76</id>
        <label>KRTAP15-1</label>
    </interactant>
    <organismsDiffer>false</organismsDiffer>
    <experiments>3</experiments>
</comment>
<comment type="interaction">
    <interactant intactId="EBI-12138495">
        <id>Q99697-2</id>
    </interactant>
    <interactant intactId="EBI-1048945">
        <id>Q3LI72</id>
        <label>KRTAP19-5</label>
    </interactant>
    <organismsDiffer>false</organismsDiffer>
    <experiments>3</experiments>
</comment>
<comment type="interaction">
    <interactant intactId="EBI-12138495">
        <id>Q99697-2</id>
    </interactant>
    <interactant intactId="EBI-10241353">
        <id>Q3SYF9</id>
        <label>KRTAP19-7</label>
    </interactant>
    <organismsDiffer>false</organismsDiffer>
    <experiments>3</experiments>
</comment>
<comment type="interaction">
    <interactant intactId="EBI-12138495">
        <id>Q99697-2</id>
    </interactant>
    <interactant intactId="EBI-3957694">
        <id>Q9BYR6</id>
        <label>KRTAP3-3</label>
    </interactant>
    <organismsDiffer>false</organismsDiffer>
    <experiments>3</experiments>
</comment>
<comment type="interaction">
    <interactant intactId="EBI-12138495">
        <id>Q99697-2</id>
    </interactant>
    <interactant intactId="EBI-12111050">
        <id>Q3LI64</id>
        <label>KRTAP6-1</label>
    </interactant>
    <organismsDiffer>false</organismsDiffer>
    <experiments>3</experiments>
</comment>
<comment type="interaction">
    <interactant intactId="EBI-12138495">
        <id>Q99697-2</id>
    </interactant>
    <interactant intactId="EBI-18394498">
        <id>Q8IUC3</id>
        <label>KRTAP7-1</label>
    </interactant>
    <organismsDiffer>false</organismsDiffer>
    <experiments>3</experiments>
</comment>
<comment type="interaction">
    <interactant intactId="EBI-12138495">
        <id>Q99697-2</id>
    </interactant>
    <interactant intactId="EBI-536879">
        <id>O43482</id>
        <label>OIP5</label>
    </interactant>
    <organismsDiffer>false</organismsDiffer>
    <experiments>3</experiments>
</comment>
<comment type="interaction">
    <interactant intactId="EBI-12138495">
        <id>Q99697-2</id>
    </interactant>
    <interactant intactId="EBI-357275">
        <id>Q99471</id>
        <label>PFDN5</label>
    </interactant>
    <organismsDiffer>false</organismsDiffer>
    <experiments>3</experiments>
</comment>
<comment type="interaction">
    <interactant intactId="EBI-12138495">
        <id>Q99697-2</id>
    </interactant>
    <interactant intactId="EBI-943588">
        <id>Q16633</id>
        <label>POU2AF1</label>
    </interactant>
    <organismsDiffer>false</organismsDiffer>
    <experiments>3</experiments>
</comment>
<comment type="interaction">
    <interactant intactId="EBI-12138495">
        <id>Q99697-2</id>
    </interactant>
    <interactant intactId="EBI-603350">
        <id>P28070</id>
        <label>PSMB4</label>
    </interactant>
    <organismsDiffer>false</organismsDiffer>
    <experiments>3</experiments>
</comment>
<comment type="interaction">
    <interactant intactId="EBI-12138495">
        <id>Q99697-2</id>
    </interactant>
    <interactant intactId="EBI-740343">
        <id>Q93062-3</id>
        <label>RBPMS</label>
    </interactant>
    <organismsDiffer>false</organismsDiffer>
    <experiments>3</experiments>
</comment>
<comment type="interaction">
    <interactant intactId="EBI-12138495">
        <id>Q99697-2</id>
    </interactant>
    <interactant intactId="EBI-12275818">
        <id>Q53HV7-2</id>
        <label>SMUG1</label>
    </interactant>
    <organismsDiffer>false</organismsDiffer>
    <experiments>3</experiments>
</comment>
<comment type="interaction">
    <interactant intactId="EBI-12138495">
        <id>Q99697-2</id>
    </interactant>
    <interactant intactId="EBI-743976">
        <id>Q96LM6</id>
        <label>SPMIP9</label>
    </interactant>
    <organismsDiffer>false</organismsDiffer>
    <experiments>3</experiments>
</comment>
<comment type="interaction">
    <interactant intactId="EBI-12138495">
        <id>Q99697-2</id>
    </interactant>
    <interactant intactId="EBI-6427217">
        <id>Q9Y458</id>
        <label>TBX22</label>
    </interactant>
    <organismsDiffer>false</organismsDiffer>
    <experiments>3</experiments>
</comment>
<comment type="interaction">
    <interactant intactId="EBI-12138495">
        <id>Q99697-2</id>
    </interactant>
    <interactant intactId="EBI-715869">
        <id>Q9GZM7</id>
        <label>TINAGL1</label>
    </interactant>
    <organismsDiffer>false</organismsDiffer>
    <experiments>3</experiments>
</comment>
<comment type="interaction">
    <interactant intactId="EBI-12138495">
        <id>Q99697-2</id>
    </interactant>
    <interactant intactId="EBI-11741437">
        <id>Q08117-2</id>
        <label>TLE5</label>
    </interactant>
    <organismsDiffer>false</organismsDiffer>
    <experiments>3</experiments>
</comment>
<comment type="interaction">
    <interactant intactId="EBI-12138495">
        <id>Q99697-2</id>
    </interactant>
    <interactant intactId="EBI-359224">
        <id>Q13077</id>
        <label>TRAF1</label>
    </interactant>
    <organismsDiffer>false</organismsDiffer>
    <experiments>3</experiments>
</comment>
<comment type="interaction">
    <interactant intactId="EBI-12138495">
        <id>Q99697-2</id>
    </interactant>
    <interactant intactId="EBI-492476">
        <id>Q96RU7</id>
        <label>TRIB3</label>
    </interactant>
    <organismsDiffer>false</organismsDiffer>
    <experiments>3</experiments>
</comment>
<comment type="interaction">
    <interactant intactId="EBI-12138495">
        <id>Q99697-2</id>
    </interactant>
    <interactant intactId="EBI-12068150">
        <id>Q6NVU6</id>
        <label>UFSP1</label>
    </interactant>
    <organismsDiffer>false</organismsDiffer>
    <experiments>3</experiments>
</comment>
<comment type="interaction">
    <interactant intactId="EBI-12138495">
        <id>Q99697-2</id>
    </interactant>
    <interactant intactId="EBI-11957216">
        <id>A8MV65-2</id>
        <label>VGLL3</label>
    </interactant>
    <organismsDiffer>false</organismsDiffer>
    <experiments>3</experiments>
</comment>
<comment type="interaction">
    <interactant intactId="EBI-12138495">
        <id>Q99697-2</id>
    </interactant>
    <interactant intactId="EBI-12040603">
        <id>Q9NZC7-5</id>
        <label>WWOX</label>
    </interactant>
    <organismsDiffer>false</organismsDiffer>
    <experiments>3</experiments>
</comment>
<comment type="interaction">
    <interactant intactId="EBI-1175243">
        <id>Q99697-3</id>
    </interactant>
    <interactant intactId="EBI-1175253">
        <id>Q12948</id>
        <label>FOXC1</label>
    </interactant>
    <organismsDiffer>false</organismsDiffer>
    <experiments>6</experiments>
</comment>
<comment type="interaction">
    <interactant intactId="EBI-1175243">
        <id>Q99697-3</id>
    </interactant>
    <interactant intactId="EBI-2656305">
        <id>Q02078</id>
        <label>MEF2A</label>
    </interactant>
    <organismsDiffer>false</organismsDiffer>
    <experiments>2</experiments>
</comment>
<comment type="interaction">
    <interactant intactId="EBI-1175243">
        <id>Q99697-3</id>
    </interactant>
    <interactant intactId="EBI-1175243">
        <id>Q99697-3</id>
        <label>PITX2</label>
    </interactant>
    <organismsDiffer>false</organismsDiffer>
    <experiments>5</experiments>
</comment>
<comment type="interaction">
    <interactant intactId="EBI-1175243">
        <id>Q99697-3</id>
    </interactant>
    <interactant intactId="EBI-9825525">
        <id>P10037</id>
        <label>Pou1f1</label>
    </interactant>
    <organismsDiffer>true</organismsDiffer>
    <experiments>2</experiments>
</comment>
<comment type="subcellular location">
    <subcellularLocation>
        <location evidence="23">Nucleus</location>
    </subcellularLocation>
    <subcellularLocation>
        <location evidence="2">Cytoplasm</location>
    </subcellularLocation>
</comment>
<comment type="alternative products">
    <event type="alternative splicing"/>
    <isoform>
        <id>Q99697-1</id>
        <name>PTX2B</name>
        <name>ARP1B</name>
        <sequence type="displayed"/>
    </isoform>
    <isoform>
        <id>Q99697-2</id>
        <name>PTX2C</name>
        <name>ARP1C</name>
        <sequence type="described" ref="VSP_002260"/>
    </isoform>
    <isoform>
        <id>Q99697-3</id>
        <name>PTX2A</name>
        <name>ARP1A</name>
        <sequence type="described" ref="VSP_002261"/>
    </isoform>
</comment>
<comment type="PTM">
    <text evidence="2">Phosphorylated at Thr-90 by AKT2, but not AKT1. Phosphorylation impairs its association with a CCND1 mRNA-stabilizing complex, thus shortening the half-life of CCND1.</text>
</comment>
<comment type="disease" evidence="8 9 10 12 16">
    <disease id="DI-01265">
        <name>Axenfeld-Rieger syndrome 1</name>
        <acronym>RIEG1</acronym>
        <description>An autosomal dominant disorder of morphogenesis that results in abnormal development of the anterior segment of the eye, and results in blindness from glaucoma in approximately 50% of affected individuals. Additional features include aniridia, maxillary hypoplasia, hypodontia, anal stenosis, redundant periumbilical skin.</description>
        <dbReference type="MIM" id="180500"/>
    </disease>
    <text>The disease is caused by variants affecting the gene represented in this entry.</text>
</comment>
<comment type="disease" evidence="7 13 17 18">
    <disease id="DI-01833">
        <name>Anterior segment dysgenesis 4</name>
        <acronym>ASGD4</acronym>
        <description>A form of anterior segment dysgenesis, a group of defects affecting anterior structures of the eye including cornea, iris, lens, trabecular meshwork, and Schlemm canal. Anterior segment dysgeneses result from abnormal migration or differentiation of the neural crest derived mesenchymal cells that give rise to components of the anterior chamber during eye development. Different anterior segment anomalies may exist alone or in combination, including iris hypoplasia, enlarged or reduced corneal diameter, corneal vascularization and opacity, posterior embryotoxon, corectopia, polycoria, abnormal iridocorneal angle, ectopia lentis, and anterior synechiae between the iris and posterior corneal surface. Clinical conditions falling within the phenotypic spectrum of anterior segment dysgeneses include aniridia, Axenfeld anomaly, Reiger anomaly/syndrome, Peters anomaly, and iridogoniodysgenesis. ASGD4 is an autosomal dominant disease.</description>
        <dbReference type="MIM" id="137600"/>
    </disease>
    <text>The disease is caused by variants affecting the gene represented in this entry.</text>
</comment>
<comment type="disease" evidence="11 14">
    <disease id="DI-02729">
        <name>Ring dermoid of cornea</name>
        <acronym>RDC</acronym>
        <description>An ocular disorder characterized by bilateral annular limbal dermoids (growths with a skin-like structure) with corneal and conjunctival extension.</description>
        <dbReference type="MIM" id="180550"/>
    </disease>
    <text>The disease is caused by variants affecting the gene represented in this entry.</text>
</comment>
<comment type="similarity">
    <text evidence="23">Belongs to the paired homeobox family. Bicoid subfamily.</text>
</comment>
<keyword id="KW-0002">3D-structure</keyword>
<keyword id="KW-0025">Alternative splicing</keyword>
<keyword id="KW-0963">Cytoplasm</keyword>
<keyword id="KW-0217">Developmental protein</keyword>
<keyword id="KW-0225">Disease variant</keyword>
<keyword id="KW-0238">DNA-binding</keyword>
<keyword id="KW-0371">Homeobox</keyword>
<keyword id="KW-0539">Nucleus</keyword>
<keyword id="KW-1059">Peters anomaly</keyword>
<keyword id="KW-0597">Phosphoprotein</keyword>
<keyword id="KW-1267">Proteomics identification</keyword>
<keyword id="KW-1185">Reference proteome</keyword>
<dbReference type="EMBL" id="U69961">
    <property type="protein sequence ID" value="AAC16257.1"/>
    <property type="molecule type" value="mRNA"/>
</dbReference>
<dbReference type="EMBL" id="AF048720">
    <property type="protein sequence ID" value="AAC39716.1"/>
    <property type="molecule type" value="mRNA"/>
</dbReference>
<dbReference type="EMBL" id="AF048721">
    <property type="protein sequence ID" value="AAC39717.1"/>
    <property type="molecule type" value="mRNA"/>
</dbReference>
<dbReference type="EMBL" id="AF048722">
    <property type="protein sequence ID" value="AAC39718.1"/>
    <property type="molecule type" value="mRNA"/>
</dbReference>
<dbReference type="EMBL" id="AF238048">
    <property type="protein sequence ID" value="AAK15048.1"/>
    <property type="molecule type" value="Genomic_DNA"/>
</dbReference>
<dbReference type="EMBL" id="AK127829">
    <property type="protein sequence ID" value="BAG54582.1"/>
    <property type="molecule type" value="mRNA"/>
</dbReference>
<dbReference type="EMBL" id="AK291591">
    <property type="protein sequence ID" value="BAF84280.1"/>
    <property type="molecule type" value="mRNA"/>
</dbReference>
<dbReference type="EMBL" id="AK313987">
    <property type="protein sequence ID" value="BAG36699.1"/>
    <property type="molecule type" value="mRNA"/>
</dbReference>
<dbReference type="EMBL" id="CH471057">
    <property type="protein sequence ID" value="EAX06262.1"/>
    <property type="molecule type" value="Genomic_DNA"/>
</dbReference>
<dbReference type="EMBL" id="CH471057">
    <property type="protein sequence ID" value="EAX06263.1"/>
    <property type="molecule type" value="Genomic_DNA"/>
</dbReference>
<dbReference type="EMBL" id="CH471057">
    <property type="protein sequence ID" value="EAX06264.1"/>
    <property type="molecule type" value="Genomic_DNA"/>
</dbReference>
<dbReference type="EMBL" id="BC013998">
    <property type="protein sequence ID" value="AAH13998.1"/>
    <property type="molecule type" value="mRNA"/>
</dbReference>
<dbReference type="EMBL" id="BC106010">
    <property type="protein sequence ID" value="AAI06011.1"/>
    <property type="molecule type" value="mRNA"/>
</dbReference>
<dbReference type="CCDS" id="CCDS3692.1">
    <molecule id="Q99697-1"/>
</dbReference>
<dbReference type="CCDS" id="CCDS3693.1">
    <molecule id="Q99697-3"/>
</dbReference>
<dbReference type="CCDS" id="CCDS3694.1">
    <molecule id="Q99697-2"/>
</dbReference>
<dbReference type="RefSeq" id="NP_000316.2">
    <molecule id="Q99697-2"/>
    <property type="nucleotide sequence ID" value="NM_000325.5"/>
</dbReference>
<dbReference type="RefSeq" id="NP_001191326.1">
    <molecule id="Q99697-1"/>
    <property type="nucleotide sequence ID" value="NM_001204397.2"/>
</dbReference>
<dbReference type="RefSeq" id="NP_001191327.1">
    <molecule id="Q99697-1"/>
    <property type="nucleotide sequence ID" value="NM_001204398.1"/>
</dbReference>
<dbReference type="RefSeq" id="NP_001191328.1">
    <molecule id="Q99697-3"/>
    <property type="nucleotide sequence ID" value="NM_001204399.1"/>
</dbReference>
<dbReference type="RefSeq" id="NP_700475.1">
    <molecule id="Q99697-1"/>
    <property type="nucleotide sequence ID" value="NM_153426.3"/>
</dbReference>
<dbReference type="RefSeq" id="NP_700476.1">
    <molecule id="Q99697-3"/>
    <property type="nucleotide sequence ID" value="NM_153427.3"/>
</dbReference>
<dbReference type="RefSeq" id="XP_011530329.1">
    <property type="nucleotide sequence ID" value="XM_011532027.2"/>
</dbReference>
<dbReference type="PDB" id="2L7F">
    <property type="method" value="NMR"/>
    <property type="chains" value="P=85-144"/>
</dbReference>
<dbReference type="PDB" id="2L7M">
    <property type="method" value="NMR"/>
    <property type="chains" value="P=85-144"/>
</dbReference>
<dbReference type="PDB" id="2LKX">
    <property type="method" value="NMR"/>
    <property type="chains" value="A=85-144"/>
</dbReference>
<dbReference type="PDBsum" id="2L7F"/>
<dbReference type="PDBsum" id="2L7M"/>
<dbReference type="PDBsum" id="2LKX"/>
<dbReference type="SMR" id="Q99697"/>
<dbReference type="BioGRID" id="111325">
    <property type="interactions" value="89"/>
</dbReference>
<dbReference type="CORUM" id="Q99697"/>
<dbReference type="FunCoup" id="Q99697">
    <property type="interactions" value="1619"/>
</dbReference>
<dbReference type="IntAct" id="Q99697">
    <property type="interactions" value="61"/>
</dbReference>
<dbReference type="MINT" id="Q99697"/>
<dbReference type="STRING" id="9606.ENSP00000495061"/>
<dbReference type="GlyGen" id="Q99697">
    <property type="glycosylation" value="3 sites, 1 O-linked glycan (1 site)"/>
</dbReference>
<dbReference type="iPTMnet" id="Q99697"/>
<dbReference type="PhosphoSitePlus" id="Q99697"/>
<dbReference type="BioMuta" id="PITX2"/>
<dbReference type="DMDM" id="6174907"/>
<dbReference type="jPOST" id="Q99697"/>
<dbReference type="MassIVE" id="Q99697"/>
<dbReference type="PaxDb" id="9606-ENSP00000304169"/>
<dbReference type="PeptideAtlas" id="Q99697"/>
<dbReference type="ProteomicsDB" id="78403">
    <molecule id="Q99697-1"/>
</dbReference>
<dbReference type="ProteomicsDB" id="78404">
    <molecule id="Q99697-2"/>
</dbReference>
<dbReference type="ProteomicsDB" id="78405">
    <molecule id="Q99697-3"/>
</dbReference>
<dbReference type="Pumba" id="Q99697"/>
<dbReference type="Antibodypedia" id="15459">
    <property type="antibodies" value="303 antibodies from 31 providers"/>
</dbReference>
<dbReference type="DNASU" id="5308"/>
<dbReference type="Ensembl" id="ENST00000354925.6">
    <molecule id="Q99697-1"/>
    <property type="protein sequence ID" value="ENSP00000347004.2"/>
    <property type="gene ID" value="ENSG00000164093.18"/>
</dbReference>
<dbReference type="Ensembl" id="ENST00000355080.9">
    <molecule id="Q99697-3"/>
    <property type="protein sequence ID" value="ENSP00000347192.5"/>
    <property type="gene ID" value="ENSG00000164093.18"/>
</dbReference>
<dbReference type="Ensembl" id="ENST00000394595.8">
    <molecule id="Q99697-1"/>
    <property type="protein sequence ID" value="ENSP00000378095.4"/>
    <property type="gene ID" value="ENSG00000164093.18"/>
</dbReference>
<dbReference type="Ensembl" id="ENST00000644743.1">
    <molecule id="Q99697-2"/>
    <property type="protein sequence ID" value="ENSP00000495061.1"/>
    <property type="gene ID" value="ENSG00000164093.18"/>
</dbReference>
<dbReference type="GeneID" id="5308"/>
<dbReference type="KEGG" id="hsa:5308"/>
<dbReference type="MANE-Select" id="ENST00000644743.1">
    <molecule id="Q99697-2"/>
    <property type="protein sequence ID" value="ENSP00000495061.1"/>
    <property type="RefSeq nucleotide sequence ID" value="NM_000325.6"/>
    <property type="RefSeq protein sequence ID" value="NP_000316.2"/>
</dbReference>
<dbReference type="UCSC" id="uc003iac.4">
    <molecule id="Q99697-1"/>
    <property type="organism name" value="human"/>
</dbReference>
<dbReference type="AGR" id="HGNC:9005"/>
<dbReference type="CTD" id="5308"/>
<dbReference type="DisGeNET" id="5308"/>
<dbReference type="GeneCards" id="PITX2"/>
<dbReference type="HGNC" id="HGNC:9005">
    <property type="gene designation" value="PITX2"/>
</dbReference>
<dbReference type="HPA" id="ENSG00000164093">
    <property type="expression patterns" value="Tissue enhanced (placenta, skeletal muscle, tongue, urinary bladder)"/>
</dbReference>
<dbReference type="MalaCards" id="PITX2"/>
<dbReference type="MIM" id="137600">
    <property type="type" value="phenotype"/>
</dbReference>
<dbReference type="MIM" id="180500">
    <property type="type" value="phenotype"/>
</dbReference>
<dbReference type="MIM" id="180550">
    <property type="type" value="phenotype"/>
</dbReference>
<dbReference type="MIM" id="601542">
    <property type="type" value="gene"/>
</dbReference>
<dbReference type="neXtProt" id="NX_Q99697"/>
<dbReference type="OpenTargets" id="ENSG00000164093"/>
<dbReference type="Orphanet" id="98978">
    <property type="disease" value="Axenfeld anomaly"/>
</dbReference>
<dbReference type="Orphanet" id="782">
    <property type="disease" value="Axenfeld-Rieger syndrome"/>
</dbReference>
<dbReference type="Orphanet" id="334">
    <property type="disease" value="Familial atrial fibrillation"/>
</dbReference>
<dbReference type="Orphanet" id="708">
    <property type="disease" value="Peters anomaly"/>
</dbReference>
<dbReference type="Orphanet" id="91483">
    <property type="disease" value="Rieger anomaly"/>
</dbReference>
<dbReference type="Orphanet" id="91481">
    <property type="disease" value="Ring dermoid of cornea"/>
</dbReference>
<dbReference type="PharmGKB" id="PA33339"/>
<dbReference type="VEuPathDB" id="HostDB:ENSG00000164093"/>
<dbReference type="eggNOG" id="KOG0486">
    <property type="taxonomic scope" value="Eukaryota"/>
</dbReference>
<dbReference type="GeneTree" id="ENSGT00940000162789"/>
<dbReference type="HOGENOM" id="CLU_030301_0_0_1"/>
<dbReference type="InParanoid" id="Q99697"/>
<dbReference type="OMA" id="NSMRNPL"/>
<dbReference type="OrthoDB" id="6159439at2759"/>
<dbReference type="PAN-GO" id="Q99697">
    <property type="GO annotations" value="5 GO annotations based on evolutionary models"/>
</dbReference>
<dbReference type="PhylomeDB" id="Q99697"/>
<dbReference type="TreeFam" id="TF351940"/>
<dbReference type="PathwayCommons" id="Q99697"/>
<dbReference type="Reactome" id="R-HSA-8866906">
    <property type="pathway name" value="TFAP2 (AP-2) family regulates transcription of other transcription factors"/>
</dbReference>
<dbReference type="SignaLink" id="Q99697"/>
<dbReference type="SIGNOR" id="Q99697"/>
<dbReference type="BioGRID-ORCS" id="5308">
    <property type="hits" value="14 hits in 1172 CRISPR screens"/>
</dbReference>
<dbReference type="ChiTaRS" id="PITX2">
    <property type="organism name" value="human"/>
</dbReference>
<dbReference type="EvolutionaryTrace" id="Q99697"/>
<dbReference type="GeneWiki" id="PITX2"/>
<dbReference type="GenomeRNAi" id="5308"/>
<dbReference type="Pharos" id="Q99697">
    <property type="development level" value="Tbio"/>
</dbReference>
<dbReference type="PRO" id="PR:Q99697"/>
<dbReference type="Proteomes" id="UP000005640">
    <property type="component" value="Chromosome 4"/>
</dbReference>
<dbReference type="RNAct" id="Q99697">
    <property type="molecule type" value="protein"/>
</dbReference>
<dbReference type="Bgee" id="ENSG00000164093">
    <property type="expression patterns" value="Expressed in gingiva and 121 other cell types or tissues"/>
</dbReference>
<dbReference type="ExpressionAtlas" id="Q99697">
    <property type="expression patterns" value="baseline and differential"/>
</dbReference>
<dbReference type="GO" id="GO:0000785">
    <property type="term" value="C:chromatin"/>
    <property type="evidence" value="ECO:0000247"/>
    <property type="project" value="NTNU_SB"/>
</dbReference>
<dbReference type="GO" id="GO:0005737">
    <property type="term" value="C:cytoplasm"/>
    <property type="evidence" value="ECO:0007669"/>
    <property type="project" value="UniProtKB-SubCell"/>
</dbReference>
<dbReference type="GO" id="GO:0005654">
    <property type="term" value="C:nucleoplasm"/>
    <property type="evidence" value="ECO:0000314"/>
    <property type="project" value="HPA"/>
</dbReference>
<dbReference type="GO" id="GO:0005634">
    <property type="term" value="C:nucleus"/>
    <property type="evidence" value="ECO:0000314"/>
    <property type="project" value="BHF-UCL"/>
</dbReference>
<dbReference type="GO" id="GO:0005667">
    <property type="term" value="C:transcription regulator complex"/>
    <property type="evidence" value="ECO:0000314"/>
    <property type="project" value="MGI"/>
</dbReference>
<dbReference type="GO" id="GO:0031490">
    <property type="term" value="F:chromatin DNA binding"/>
    <property type="evidence" value="ECO:0007669"/>
    <property type="project" value="Ensembl"/>
</dbReference>
<dbReference type="GO" id="GO:0003700">
    <property type="term" value="F:DNA-binding transcription factor activity"/>
    <property type="evidence" value="ECO:0000314"/>
    <property type="project" value="UniProtKB"/>
</dbReference>
<dbReference type="GO" id="GO:0000981">
    <property type="term" value="F:DNA-binding transcription factor activity, RNA polymerase II-specific"/>
    <property type="evidence" value="ECO:0000314"/>
    <property type="project" value="BHF-UCL"/>
</dbReference>
<dbReference type="GO" id="GO:0140297">
    <property type="term" value="F:DNA-binding transcription factor binding"/>
    <property type="evidence" value="ECO:0000353"/>
    <property type="project" value="UniProtKB"/>
</dbReference>
<dbReference type="GO" id="GO:0001227">
    <property type="term" value="F:DNA-binding transcription repressor activity, RNA polymerase II-specific"/>
    <property type="evidence" value="ECO:0000314"/>
    <property type="project" value="BHF-UCL"/>
</dbReference>
<dbReference type="GO" id="GO:0042802">
    <property type="term" value="F:identical protein binding"/>
    <property type="evidence" value="ECO:0000353"/>
    <property type="project" value="IntAct"/>
</dbReference>
<dbReference type="GO" id="GO:0051219">
    <property type="term" value="F:phosphoprotein binding"/>
    <property type="evidence" value="ECO:0000353"/>
    <property type="project" value="BHF-UCL"/>
</dbReference>
<dbReference type="GO" id="GO:0042803">
    <property type="term" value="F:protein homodimerization activity"/>
    <property type="evidence" value="ECO:0000353"/>
    <property type="project" value="BHF-UCL"/>
</dbReference>
<dbReference type="GO" id="GO:0043021">
    <property type="term" value="F:ribonucleoprotein complex binding"/>
    <property type="evidence" value="ECO:0000314"/>
    <property type="project" value="BHF-UCL"/>
</dbReference>
<dbReference type="GO" id="GO:0000978">
    <property type="term" value="F:RNA polymerase II cis-regulatory region sequence-specific DNA binding"/>
    <property type="evidence" value="ECO:0000318"/>
    <property type="project" value="GO_Central"/>
</dbReference>
<dbReference type="GO" id="GO:0061629">
    <property type="term" value="F:RNA polymerase II-specific DNA-binding transcription factor binding"/>
    <property type="evidence" value="ECO:0000353"/>
    <property type="project" value="BHF-UCL"/>
</dbReference>
<dbReference type="GO" id="GO:1990837">
    <property type="term" value="F:sequence-specific double-stranded DNA binding"/>
    <property type="evidence" value="ECO:0000314"/>
    <property type="project" value="ARUK-UCL"/>
</dbReference>
<dbReference type="GO" id="GO:0000976">
    <property type="term" value="F:transcription cis-regulatory region binding"/>
    <property type="evidence" value="ECO:0000314"/>
    <property type="project" value="BHF-UCL"/>
</dbReference>
<dbReference type="GO" id="GO:0009653">
    <property type="term" value="P:anatomical structure morphogenesis"/>
    <property type="evidence" value="ECO:0000318"/>
    <property type="project" value="GO_Central"/>
</dbReference>
<dbReference type="GO" id="GO:0055009">
    <property type="term" value="P:atrial cardiac muscle tissue morphogenesis"/>
    <property type="evidence" value="ECO:0007669"/>
    <property type="project" value="Ensembl"/>
</dbReference>
<dbReference type="GO" id="GO:0003171">
    <property type="term" value="P:atrioventricular valve development"/>
    <property type="evidence" value="ECO:0007669"/>
    <property type="project" value="Ensembl"/>
</dbReference>
<dbReference type="GO" id="GO:0001569">
    <property type="term" value="P:branching involved in blood vessel morphogenesis"/>
    <property type="evidence" value="ECO:0007669"/>
    <property type="project" value="Ensembl"/>
</dbReference>
<dbReference type="GO" id="GO:0043010">
    <property type="term" value="P:camera-type eye development"/>
    <property type="evidence" value="ECO:0000315"/>
    <property type="project" value="BHF-UCL"/>
</dbReference>
<dbReference type="GO" id="GO:0003253">
    <property type="term" value="P:cardiac neural crest cell migration involved in outflow tract morphogenesis"/>
    <property type="evidence" value="ECO:0000250"/>
    <property type="project" value="BHF-UCL"/>
</dbReference>
<dbReference type="GO" id="GO:0061325">
    <property type="term" value="P:cell proliferation involved in outflow tract morphogenesis"/>
    <property type="evidence" value="ECO:0007669"/>
    <property type="project" value="Ensembl"/>
</dbReference>
<dbReference type="GO" id="GO:0035993">
    <property type="term" value="P:deltoid tuberosity development"/>
    <property type="evidence" value="ECO:0000315"/>
    <property type="project" value="BHF-UCL"/>
</dbReference>
<dbReference type="GO" id="GO:0007368">
    <property type="term" value="P:determination of left/right symmetry"/>
    <property type="evidence" value="ECO:0000250"/>
    <property type="project" value="BHF-UCL"/>
</dbReference>
<dbReference type="GO" id="GO:0031076">
    <property type="term" value="P:embryonic camera-type eye development"/>
    <property type="evidence" value="ECO:0007669"/>
    <property type="project" value="Ensembl"/>
</dbReference>
<dbReference type="GO" id="GO:0048557">
    <property type="term" value="P:embryonic digestive tract morphogenesis"/>
    <property type="evidence" value="ECO:0007669"/>
    <property type="project" value="Ensembl"/>
</dbReference>
<dbReference type="GO" id="GO:0060971">
    <property type="term" value="P:embryonic heart tube left/right pattern formation"/>
    <property type="evidence" value="ECO:0000250"/>
    <property type="project" value="BHF-UCL"/>
</dbReference>
<dbReference type="GO" id="GO:0035116">
    <property type="term" value="P:embryonic hindlimb morphogenesis"/>
    <property type="evidence" value="ECO:0007669"/>
    <property type="project" value="Ensembl"/>
</dbReference>
<dbReference type="GO" id="GO:0061031">
    <property type="term" value="P:endodermal digestive tract morphogenesis"/>
    <property type="evidence" value="ECO:0007669"/>
    <property type="project" value="Ensembl"/>
</dbReference>
<dbReference type="GO" id="GO:0002074">
    <property type="term" value="P:extraocular skeletal muscle development"/>
    <property type="evidence" value="ECO:0007669"/>
    <property type="project" value="Ensembl"/>
</dbReference>
<dbReference type="GO" id="GO:0035315">
    <property type="term" value="P:hair cell differentiation"/>
    <property type="evidence" value="ECO:0000305"/>
    <property type="project" value="BHF-UCL"/>
</dbReference>
<dbReference type="GO" id="GO:0021855">
    <property type="term" value="P:hypothalamus cell migration"/>
    <property type="evidence" value="ECO:0007669"/>
    <property type="project" value="Ensembl"/>
</dbReference>
<dbReference type="GO" id="GO:0001701">
    <property type="term" value="P:in utero embryonic development"/>
    <property type="evidence" value="ECO:0007669"/>
    <property type="project" value="Ensembl"/>
</dbReference>
<dbReference type="GO" id="GO:0061072">
    <property type="term" value="P:iris morphogenesis"/>
    <property type="evidence" value="ECO:0000315"/>
    <property type="project" value="BHF-UCL"/>
</dbReference>
<dbReference type="GO" id="GO:0060460">
    <property type="term" value="P:left lung morphogenesis"/>
    <property type="evidence" value="ECO:0007669"/>
    <property type="project" value="Ensembl"/>
</dbReference>
<dbReference type="GO" id="GO:0070986">
    <property type="term" value="P:left/right axis specification"/>
    <property type="evidence" value="ECO:0000250"/>
    <property type="project" value="BHF-UCL"/>
</dbReference>
<dbReference type="GO" id="GO:0000122">
    <property type="term" value="P:negative regulation of transcription by RNA polymerase II"/>
    <property type="evidence" value="ECO:0000314"/>
    <property type="project" value="BHF-UCL"/>
</dbReference>
<dbReference type="GO" id="GO:0001764">
    <property type="term" value="P:neuron migration"/>
    <property type="evidence" value="ECO:0007669"/>
    <property type="project" value="Ensembl"/>
</dbReference>
<dbReference type="GO" id="GO:0042476">
    <property type="term" value="P:odontogenesis"/>
    <property type="evidence" value="ECO:0000315"/>
    <property type="project" value="BHF-UCL"/>
</dbReference>
<dbReference type="GO" id="GO:0003151">
    <property type="term" value="P:outflow tract morphogenesis"/>
    <property type="evidence" value="ECO:0000250"/>
    <property type="project" value="BHF-UCL"/>
</dbReference>
<dbReference type="GO" id="GO:0008284">
    <property type="term" value="P:positive regulation of cell population proliferation"/>
    <property type="evidence" value="ECO:0000250"/>
    <property type="project" value="BHF-UCL"/>
</dbReference>
<dbReference type="GO" id="GO:0045944">
    <property type="term" value="P:positive regulation of transcription by RNA polymerase II"/>
    <property type="evidence" value="ECO:0000314"/>
    <property type="project" value="BHF-UCL"/>
</dbReference>
<dbReference type="GO" id="GO:0060127">
    <property type="term" value="P:prolactin secreting cell differentiation"/>
    <property type="evidence" value="ECO:0000304"/>
    <property type="project" value="BHF-UCL"/>
</dbReference>
<dbReference type="GO" id="GO:0003350">
    <property type="term" value="P:pulmonary myocardium development"/>
    <property type="evidence" value="ECO:0007669"/>
    <property type="project" value="Ensembl"/>
</dbReference>
<dbReference type="GO" id="GO:0060577">
    <property type="term" value="P:pulmonary vein morphogenesis"/>
    <property type="evidence" value="ECO:0007669"/>
    <property type="project" value="Ensembl"/>
</dbReference>
<dbReference type="GO" id="GO:0030334">
    <property type="term" value="P:regulation of cell migration"/>
    <property type="evidence" value="ECO:0007669"/>
    <property type="project" value="Ensembl"/>
</dbReference>
<dbReference type="GO" id="GO:0006355">
    <property type="term" value="P:regulation of DNA-templated transcription"/>
    <property type="evidence" value="ECO:0000314"/>
    <property type="project" value="UniProtKB"/>
</dbReference>
<dbReference type="GO" id="GO:0006357">
    <property type="term" value="P:regulation of transcription by RNA polymerase II"/>
    <property type="evidence" value="ECO:0000314"/>
    <property type="project" value="MGI"/>
</dbReference>
<dbReference type="GO" id="GO:0060126">
    <property type="term" value="P:somatotropin secreting cell differentiation"/>
    <property type="evidence" value="ECO:0000304"/>
    <property type="project" value="BHF-UCL"/>
</dbReference>
<dbReference type="GO" id="GO:0048536">
    <property type="term" value="P:spleen development"/>
    <property type="evidence" value="ECO:0000250"/>
    <property type="project" value="BHF-UCL"/>
</dbReference>
<dbReference type="GO" id="GO:0021763">
    <property type="term" value="P:subthalamic nucleus development"/>
    <property type="evidence" value="ECO:0007669"/>
    <property type="project" value="Ensembl"/>
</dbReference>
<dbReference type="GO" id="GO:0060578">
    <property type="term" value="P:superior vena cava morphogenesis"/>
    <property type="evidence" value="ECO:0007669"/>
    <property type="project" value="Ensembl"/>
</dbReference>
<dbReference type="GO" id="GO:0035886">
    <property type="term" value="P:vascular associated smooth muscle cell differentiation"/>
    <property type="evidence" value="ECO:0007669"/>
    <property type="project" value="Ensembl"/>
</dbReference>
<dbReference type="GO" id="GO:0001570">
    <property type="term" value="P:vasculogenesis"/>
    <property type="evidence" value="ECO:0007669"/>
    <property type="project" value="Ensembl"/>
</dbReference>
<dbReference type="GO" id="GO:0055015">
    <property type="term" value="P:ventricular cardiac muscle cell development"/>
    <property type="evidence" value="ECO:0007669"/>
    <property type="project" value="Ensembl"/>
</dbReference>
<dbReference type="GO" id="GO:0060412">
    <property type="term" value="P:ventricular septum morphogenesis"/>
    <property type="evidence" value="ECO:0007669"/>
    <property type="project" value="Ensembl"/>
</dbReference>
<dbReference type="GO" id="GO:0016055">
    <property type="term" value="P:Wnt signaling pathway"/>
    <property type="evidence" value="ECO:0007669"/>
    <property type="project" value="Ensembl"/>
</dbReference>
<dbReference type="CDD" id="cd00086">
    <property type="entry name" value="homeodomain"/>
    <property type="match status" value="1"/>
</dbReference>
<dbReference type="FunFam" id="1.10.10.60:FF:000031">
    <property type="entry name" value="Homeobox protein"/>
    <property type="match status" value="1"/>
</dbReference>
<dbReference type="Gene3D" id="1.10.10.60">
    <property type="entry name" value="Homeodomain-like"/>
    <property type="match status" value="1"/>
</dbReference>
<dbReference type="InterPro" id="IPR001356">
    <property type="entry name" value="HD"/>
</dbReference>
<dbReference type="InterPro" id="IPR017970">
    <property type="entry name" value="Homeobox_CS"/>
</dbReference>
<dbReference type="InterPro" id="IPR016233">
    <property type="entry name" value="Homeobox_Pitx/unc30"/>
</dbReference>
<dbReference type="InterPro" id="IPR009057">
    <property type="entry name" value="Homeodomain-like_sf"/>
</dbReference>
<dbReference type="InterPro" id="IPR003654">
    <property type="entry name" value="OAR_dom"/>
</dbReference>
<dbReference type="PANTHER" id="PTHR45882:SF4">
    <property type="entry name" value="PITUITARY HOMEOBOX 2"/>
    <property type="match status" value="1"/>
</dbReference>
<dbReference type="PANTHER" id="PTHR45882">
    <property type="entry name" value="PITUITARY HOMEOBOX HOMOLOG PTX1"/>
    <property type="match status" value="1"/>
</dbReference>
<dbReference type="Pfam" id="PF00046">
    <property type="entry name" value="Homeodomain"/>
    <property type="match status" value="1"/>
</dbReference>
<dbReference type="Pfam" id="PF03826">
    <property type="entry name" value="OAR"/>
    <property type="match status" value="1"/>
</dbReference>
<dbReference type="PIRSF" id="PIRSF000563">
    <property type="entry name" value="Homeobox_protein_Pitx/Unc30"/>
    <property type="match status" value="1"/>
</dbReference>
<dbReference type="SMART" id="SM00389">
    <property type="entry name" value="HOX"/>
    <property type="match status" value="1"/>
</dbReference>
<dbReference type="SUPFAM" id="SSF46689">
    <property type="entry name" value="Homeodomain-like"/>
    <property type="match status" value="1"/>
</dbReference>
<dbReference type="PROSITE" id="PS00027">
    <property type="entry name" value="HOMEOBOX_1"/>
    <property type="match status" value="1"/>
</dbReference>
<dbReference type="PROSITE" id="PS50071">
    <property type="entry name" value="HOMEOBOX_2"/>
    <property type="match status" value="1"/>
</dbReference>
<dbReference type="PROSITE" id="PS50803">
    <property type="entry name" value="OAR"/>
    <property type="match status" value="1"/>
</dbReference>
<evidence type="ECO:0000250" key="1"/>
<evidence type="ECO:0000250" key="2">
    <source>
        <dbReference type="UniProtKB" id="P97474"/>
    </source>
</evidence>
<evidence type="ECO:0000255" key="3"/>
<evidence type="ECO:0000255" key="4">
    <source>
        <dbReference type="PROSITE-ProRule" id="PRU00108"/>
    </source>
</evidence>
<evidence type="ECO:0000255" key="5">
    <source>
        <dbReference type="PROSITE-ProRule" id="PRU00138"/>
    </source>
</evidence>
<evidence type="ECO:0000256" key="6">
    <source>
        <dbReference type="SAM" id="MobiDB-lite"/>
    </source>
</evidence>
<evidence type="ECO:0000269" key="7">
    <source>
    </source>
</evidence>
<evidence type="ECO:0000269" key="8">
    <source>
    </source>
</evidence>
<evidence type="ECO:0000269" key="9">
    <source>
    </source>
</evidence>
<evidence type="ECO:0000269" key="10">
    <source>
    </source>
</evidence>
<evidence type="ECO:0000269" key="11">
    <source>
    </source>
</evidence>
<evidence type="ECO:0000269" key="12">
    <source>
    </source>
</evidence>
<evidence type="ECO:0000269" key="13">
    <source>
    </source>
</evidence>
<evidence type="ECO:0000269" key="14">
    <source>
    </source>
</evidence>
<evidence type="ECO:0000269" key="15">
    <source>
    </source>
</evidence>
<evidence type="ECO:0000269" key="16">
    <source>
    </source>
</evidence>
<evidence type="ECO:0000269" key="17">
    <source>
    </source>
</evidence>
<evidence type="ECO:0000269" key="18">
    <source>
    </source>
</evidence>
<evidence type="ECO:0000303" key="19">
    <source>
    </source>
</evidence>
<evidence type="ECO:0000303" key="20">
    <source>
    </source>
</evidence>
<evidence type="ECO:0000303" key="21">
    <source>
    </source>
</evidence>
<evidence type="ECO:0000303" key="22">
    <source>
    </source>
</evidence>
<evidence type="ECO:0000305" key="23"/>
<evidence type="ECO:0000312" key="24">
    <source>
        <dbReference type="HGNC" id="HGNC:9005"/>
    </source>
</evidence>
<evidence type="ECO:0007829" key="25">
    <source>
        <dbReference type="PDB" id="2L7F"/>
    </source>
</evidence>
<evidence type="ECO:0007829" key="26">
    <source>
        <dbReference type="PDB" id="2L7M"/>
    </source>
</evidence>
<protein>
    <recommendedName>
        <fullName evidence="23">Pituitary homeobox 2</fullName>
    </recommendedName>
    <alternativeName>
        <fullName>ALL1-responsive protein ARP1</fullName>
    </alternativeName>
    <alternativeName>
        <fullName>Homeobox protein PITX2</fullName>
    </alternativeName>
    <alternativeName>
        <fullName>Paired-like homeodomain transcription factor 2</fullName>
    </alternativeName>
    <alternativeName>
        <fullName>RIEG bicoid-related homeobox transcription factor</fullName>
    </alternativeName>
    <alternativeName>
        <fullName evidence="21">Solurshin</fullName>
    </alternativeName>
</protein>
<organism>
    <name type="scientific">Homo sapiens</name>
    <name type="common">Human</name>
    <dbReference type="NCBI Taxonomy" id="9606"/>
    <lineage>
        <taxon>Eukaryota</taxon>
        <taxon>Metazoa</taxon>
        <taxon>Chordata</taxon>
        <taxon>Craniata</taxon>
        <taxon>Vertebrata</taxon>
        <taxon>Euteleostomi</taxon>
        <taxon>Mammalia</taxon>
        <taxon>Eutheria</taxon>
        <taxon>Euarchontoglires</taxon>
        <taxon>Primates</taxon>
        <taxon>Haplorrhini</taxon>
        <taxon>Catarrhini</taxon>
        <taxon>Hominidae</taxon>
        <taxon>Homo</taxon>
    </lineage>
</organism>
<accession>Q99697</accession>
<accession>A8K6C6</accession>
<accession>B2RA02</accession>
<accession>B3KXS0</accession>
<accession>O60578</accession>
<accession>O60579</accession>
<accession>O60580</accession>
<accession>Q3KQX9</accession>
<accession>Q9BY17</accession>
<gene>
    <name evidence="24" type="primary">PITX2</name>
    <name type="synonym">ARP1</name>
    <name type="synonym">RGS</name>
    <name type="synonym">RIEG</name>
    <name evidence="21" type="synonym">RIEG1</name>
</gene>
<feature type="chain" id="PRO_0000049223" description="Pituitary homeobox 2">
    <location>
        <begin position="1"/>
        <end position="317"/>
    </location>
</feature>
<feature type="DNA-binding region" description="Homeobox" evidence="4">
    <location>
        <begin position="85"/>
        <end position="144"/>
    </location>
</feature>
<feature type="region of interest" description="Disordered" evidence="6">
    <location>
        <begin position="35"/>
        <end position="99"/>
    </location>
</feature>
<feature type="short sequence motif" description="OAR" evidence="5">
    <location>
        <begin position="279"/>
        <end position="292"/>
    </location>
</feature>
<feature type="short sequence motif" description="Nuclear localization signal" evidence="3">
    <location>
        <begin position="285"/>
        <end position="289"/>
    </location>
</feature>
<feature type="compositionally biased region" description="Basic and acidic residues" evidence="6">
    <location>
        <begin position="35"/>
        <end position="48"/>
    </location>
</feature>
<feature type="compositionally biased region" description="Basic and acidic residues" evidence="6">
    <location>
        <begin position="60"/>
        <end position="73"/>
    </location>
</feature>
<feature type="compositionally biased region" description="Basic residues" evidence="6">
    <location>
        <begin position="81"/>
        <end position="90"/>
    </location>
</feature>
<feature type="modified residue" description="Phosphothreonine; by PKB/AKT2" evidence="1">
    <location>
        <position position="90"/>
    </location>
</feature>
<feature type="splice variant" id="VSP_002260" description="In isoform PTX2C." evidence="19 20 22">
    <original>METNCRKLVSACVQLGVQPAAVECLFSKDSEIKKVEFTDSPESRKEAASSKFFPRQHPGAN</original>
    <variation>MNCMKGPLHLEHRAAGTKLSAVSSSSCHHPQPLAMASVLAPGQPRSLDSSKHRLEVHTISDTSSPEAA</variation>
    <location>
        <begin position="1"/>
        <end position="61"/>
    </location>
</feature>
<feature type="splice variant" id="VSP_002261" description="In isoform PTX2A." evidence="19 20 22">
    <location>
        <begin position="16"/>
        <end position="61"/>
    </location>
</feature>
<feature type="sequence variant" id="VAR_003763" description="In RIEG1; dbSNP:rs104893857." evidence="16">
    <original>L</original>
    <variation>Q</variation>
    <location>
        <position position="100"/>
    </location>
</feature>
<feature type="sequence variant" id="VAR_035027" description="In RDC; results in 25% loss of transactivation activity; dbSNP:rs104893862." evidence="11 14">
    <original>R</original>
    <variation>H</variation>
    <location>
        <position position="108"/>
    </location>
</feature>
<feature type="sequence variant" id="VAR_058735" description="In RIEG1; dbSNP:rs1057519484." evidence="10 12">
    <original>P</original>
    <variation>L</variation>
    <location>
        <position position="110"/>
    </location>
</feature>
<feature type="sequence variant" id="VAR_058736" description="In RIEG1." evidence="12">
    <original>P</original>
    <variation>R</variation>
    <location>
        <position position="110"/>
    </location>
</feature>
<feature type="sequence variant" id="VAR_003764" description="In RIEG1; dbSNP:rs104893858." evidence="16">
    <original>T</original>
    <variation>P</variation>
    <location>
        <position position="114"/>
    </location>
</feature>
<feature type="sequence variant" id="VAR_003765" description="In ASGD4; dbSNP:rs104893861." evidence="18">
    <original>R</original>
    <variation>H</variation>
    <location>
        <position position="115"/>
    </location>
</feature>
<feature type="sequence variant" id="VAR_035028" description="In RIEG1; more than 100-fold reduction in DNA binding activity as well as no detectable transactivation activity.">
    <location>
        <begin position="128"/>
        <end position="134"/>
    </location>
</feature>
<feature type="sequence variant" id="VAR_035029" description="In RIEG1; more than 200% increase in transactivation activity; dbSNP:rs121909249." evidence="9">
    <original>V</original>
    <variation>L</variation>
    <location>
        <position position="129"/>
    </location>
</feature>
<feature type="sequence variant" id="VAR_003762" description="In ASGD4; dbSNP:rs121909248." evidence="17">
    <original>R</original>
    <variation>W</variation>
    <location>
        <position position="130"/>
    </location>
</feature>
<feature type="sequence variant" id="VAR_058737" description="In RIEG1; dbSNP:rs387906810." evidence="8">
    <original>K</original>
    <variation>E</variation>
    <location>
        <position position="134"/>
    </location>
</feature>
<feature type="sequence variant" id="VAR_058738" description="In RIEG1." evidence="8 10">
    <original>R</original>
    <variation>C</variation>
    <location>
        <position position="136"/>
    </location>
</feature>
<feature type="sequence variant" id="VAR_003766" description="In RIEG1; dbSNP:rs104893859." evidence="16">
    <original>R</original>
    <variation>P</variation>
    <location>
        <position position="137"/>
    </location>
</feature>
<feature type="sequence variant" id="VAR_058739" description="In RIEG1." evidence="10">
    <original>L</original>
    <variation>V</variation>
    <location>
        <position position="151"/>
    </location>
</feature>
<feature type="sequence variant" id="VAR_058740" description="In RIEG1." evidence="10">
    <original>N</original>
    <variation>T</variation>
    <location>
        <position position="154"/>
    </location>
</feature>
<feature type="sequence variant" id="VAR_088641" description="In RIEG1." evidence="16">
    <location>
        <begin position="179"/>
        <end position="317"/>
    </location>
</feature>
<feature type="sequence conflict" description="In Ref. 1 and 3." evidence="23" ref="1 3">
    <original>V</original>
    <variation>L</variation>
    <location>
        <position position="13"/>
    </location>
</feature>
<feature type="sequence conflict" description="In Ref. 1; AAC16257." evidence="23" ref="1">
    <original>E</original>
    <variation>Q</variation>
    <location>
        <position position="99"/>
    </location>
</feature>
<feature type="sequence conflict" description="In Ref. 4; BAF84280." evidence="23" ref="4">
    <original>A</original>
    <variation>T</variation>
    <location>
        <position position="127"/>
    </location>
</feature>
<feature type="sequence conflict" description="In Ref. 1 and 3." evidence="23" ref="1 3">
    <original>N</original>
    <variation>K</variation>
    <location>
        <position position="301"/>
    </location>
</feature>
<feature type="strand" evidence="26">
    <location>
        <begin position="86"/>
        <end position="88"/>
    </location>
</feature>
<feature type="strand" evidence="26">
    <location>
        <begin position="90"/>
        <end position="92"/>
    </location>
</feature>
<feature type="helix" evidence="25">
    <location>
        <begin position="94"/>
        <end position="106"/>
    </location>
</feature>
<feature type="helix" evidence="25">
    <location>
        <begin position="112"/>
        <end position="122"/>
    </location>
</feature>
<feature type="helix" evidence="25">
    <location>
        <begin position="126"/>
        <end position="141"/>
    </location>
</feature>
<feature type="sequence variant" id="VAR_082833" description="In ASGD4." evidence="13">
    <original>F</original>
    <variation>L</variation>
    <location sequence="Q99697-3">
        <position position="58"/>
    </location>
</feature>
<proteinExistence type="evidence at protein level"/>